<organism>
    <name type="scientific">Eremothecium gossypii (strain ATCC 10895 / CBS 109.51 / FGSC 9923 / NRRL Y-1056)</name>
    <name type="common">Yeast</name>
    <name type="synonym">Ashbya gossypii</name>
    <dbReference type="NCBI Taxonomy" id="284811"/>
    <lineage>
        <taxon>Eukaryota</taxon>
        <taxon>Fungi</taxon>
        <taxon>Dikarya</taxon>
        <taxon>Ascomycota</taxon>
        <taxon>Saccharomycotina</taxon>
        <taxon>Saccharomycetes</taxon>
        <taxon>Saccharomycetales</taxon>
        <taxon>Saccharomycetaceae</taxon>
        <taxon>Eremothecium</taxon>
    </lineage>
</organism>
<comment type="subunit">
    <text evidence="1">Component of the mitochondrial large ribosomal subunit. Mature mitochondrial ribosomes consist of a small (37S) and a large (54S) subunit. The 37S subunit contains at least 33 different proteins and 1 molecule of RNA (15S). The 54S subunit contains at least 45 different proteins and 1 molecule of RNA (21S) (By similarity).</text>
</comment>
<comment type="subcellular location">
    <subcellularLocation>
        <location evidence="1">Mitochondrion</location>
    </subcellularLocation>
</comment>
<comment type="similarity">
    <text evidence="2">Belongs to the mitochondrion-specific ribosomal protein mL43 family.</text>
</comment>
<sequence length="142" mass="15942">MVVKALRQISVGQNGVGAFIFPCKKITLQYCNWGGSSQGLRDFLTSKRLAKWAEKYPQIQFEVVAKAGHPVLKAEYINGLNKAICVRNLNVDHVELKLKLLRESSGAQLRHYPKNANVLSLNQSVRGVWSPLHVDPALRHRV</sequence>
<gene>
    <name type="primary">MRPL51</name>
    <name type="ordered locus">AEL321C</name>
</gene>
<name>RM51_EREGS</name>
<reference key="1">
    <citation type="journal article" date="2004" name="Science">
        <title>The Ashbya gossypii genome as a tool for mapping the ancient Saccharomyces cerevisiae genome.</title>
        <authorList>
            <person name="Dietrich F.S."/>
            <person name="Voegeli S."/>
            <person name="Brachat S."/>
            <person name="Lerch A."/>
            <person name="Gates K."/>
            <person name="Steiner S."/>
            <person name="Mohr C."/>
            <person name="Poehlmann R."/>
            <person name="Luedi P."/>
            <person name="Choi S."/>
            <person name="Wing R.A."/>
            <person name="Flavier A."/>
            <person name="Gaffney T.D."/>
            <person name="Philippsen P."/>
        </authorList>
    </citation>
    <scope>NUCLEOTIDE SEQUENCE [LARGE SCALE GENOMIC DNA]</scope>
    <source>
        <strain>ATCC 10895 / CBS 109.51 / FGSC 9923 / NRRL Y-1056</strain>
    </source>
</reference>
<reference key="2">
    <citation type="journal article" date="2013" name="G3 (Bethesda)">
        <title>Genomes of Ashbya fungi isolated from insects reveal four mating-type loci, numerous translocations, lack of transposons, and distinct gene duplications.</title>
        <authorList>
            <person name="Dietrich F.S."/>
            <person name="Voegeli S."/>
            <person name="Kuo S."/>
            <person name="Philippsen P."/>
        </authorList>
    </citation>
    <scope>GENOME REANNOTATION</scope>
    <source>
        <strain>ATCC 10895 / CBS 109.51 / FGSC 9923 / NRRL Y-1056</strain>
    </source>
</reference>
<keyword id="KW-0496">Mitochondrion</keyword>
<keyword id="KW-1185">Reference proteome</keyword>
<keyword id="KW-0687">Ribonucleoprotein</keyword>
<keyword id="KW-0689">Ribosomal protein</keyword>
<dbReference type="EMBL" id="AE016818">
    <property type="protein sequence ID" value="AAS52363.1"/>
    <property type="molecule type" value="Genomic_DNA"/>
</dbReference>
<dbReference type="RefSeq" id="NP_984539.1">
    <property type="nucleotide sequence ID" value="NM_209892.1"/>
</dbReference>
<dbReference type="SMR" id="Q758S3"/>
<dbReference type="FunCoup" id="Q758S3">
    <property type="interactions" value="393"/>
</dbReference>
<dbReference type="STRING" id="284811.Q758S3"/>
<dbReference type="EnsemblFungi" id="AAS52363">
    <property type="protein sequence ID" value="AAS52363"/>
    <property type="gene ID" value="AGOS_AEL321C"/>
</dbReference>
<dbReference type="GeneID" id="4620709"/>
<dbReference type="KEGG" id="ago:AGOS_AEL321C"/>
<dbReference type="eggNOG" id="KOG3445">
    <property type="taxonomic scope" value="Eukaryota"/>
</dbReference>
<dbReference type="HOGENOM" id="CLU_117700_1_1_1"/>
<dbReference type="InParanoid" id="Q758S3"/>
<dbReference type="OMA" id="WPSSANT"/>
<dbReference type="OrthoDB" id="88at2759"/>
<dbReference type="Proteomes" id="UP000000591">
    <property type="component" value="Chromosome V"/>
</dbReference>
<dbReference type="GO" id="GO:0005762">
    <property type="term" value="C:mitochondrial large ribosomal subunit"/>
    <property type="evidence" value="ECO:0000318"/>
    <property type="project" value="GO_Central"/>
</dbReference>
<dbReference type="GO" id="GO:0003735">
    <property type="term" value="F:structural constituent of ribosome"/>
    <property type="evidence" value="ECO:0000318"/>
    <property type="project" value="GO_Central"/>
</dbReference>
<dbReference type="GO" id="GO:0045454">
    <property type="term" value="P:cell redox homeostasis"/>
    <property type="evidence" value="ECO:0007669"/>
    <property type="project" value="EnsemblFungi"/>
</dbReference>
<dbReference type="GO" id="GO:0000002">
    <property type="term" value="P:mitochondrial genome maintenance"/>
    <property type="evidence" value="ECO:0007669"/>
    <property type="project" value="EnsemblFungi"/>
</dbReference>
<dbReference type="GO" id="GO:0032543">
    <property type="term" value="P:mitochondrial translation"/>
    <property type="evidence" value="ECO:0007669"/>
    <property type="project" value="InterPro"/>
</dbReference>
<dbReference type="FunFam" id="3.40.30.10:FF:000173">
    <property type="entry name" value="Mitochondrial 54S ribosomal protein"/>
    <property type="match status" value="1"/>
</dbReference>
<dbReference type="Gene3D" id="3.40.30.10">
    <property type="entry name" value="Glutaredoxin"/>
    <property type="match status" value="1"/>
</dbReference>
<dbReference type="InterPro" id="IPR039927">
    <property type="entry name" value="Ribosomal_mL43"/>
</dbReference>
<dbReference type="InterPro" id="IPR007741">
    <property type="entry name" value="Ribosomal_mL43/mS25/NADH_DH"/>
</dbReference>
<dbReference type="InterPro" id="IPR036249">
    <property type="entry name" value="Thioredoxin-like_sf"/>
</dbReference>
<dbReference type="PANTHER" id="PTHR21396">
    <property type="entry name" value="39S RIBOSOMAL PROTEIN L43"/>
    <property type="match status" value="1"/>
</dbReference>
<dbReference type="PANTHER" id="PTHR21396:SF2">
    <property type="entry name" value="LARGE RIBOSOMAL SUBUNIT PROTEIN ML43"/>
    <property type="match status" value="1"/>
</dbReference>
<dbReference type="Pfam" id="PF05047">
    <property type="entry name" value="L51_S25_CI-B8"/>
    <property type="match status" value="1"/>
</dbReference>
<dbReference type="SMART" id="SM00916">
    <property type="entry name" value="L51_S25_CI-B8"/>
    <property type="match status" value="1"/>
</dbReference>
<dbReference type="SUPFAM" id="SSF52833">
    <property type="entry name" value="Thioredoxin-like"/>
    <property type="match status" value="1"/>
</dbReference>
<protein>
    <recommendedName>
        <fullName evidence="2">Large ribosomal subunit protein mL43</fullName>
    </recommendedName>
    <alternativeName>
        <fullName>54S ribosomal protein L51, mitochondrial</fullName>
    </alternativeName>
</protein>
<proteinExistence type="inferred from homology"/>
<evidence type="ECO:0000250" key="1"/>
<evidence type="ECO:0000305" key="2"/>
<feature type="chain" id="PRO_0000372634" description="Large ribosomal subunit protein mL43">
    <location>
        <begin position="1"/>
        <end position="142"/>
    </location>
</feature>
<accession>Q758S3</accession>